<protein>
    <recommendedName>
        <fullName evidence="11">Large ribosomal subunit protein bL32m</fullName>
    </recommendedName>
    <alternativeName>
        <fullName>54S ribosomal protein L32, mitochondrial</fullName>
    </alternativeName>
    <alternativeName>
        <fullName>YmL32</fullName>
    </alternativeName>
</protein>
<gene>
    <name evidence="10" type="primary">MRPL32</name>
    <name type="ordered locus">YCR003W</name>
    <name type="ORF">YCR041</name>
    <name type="ORF">YCR3W</name>
</gene>
<keyword id="KW-0002">3D-structure</keyword>
<keyword id="KW-0903">Direct protein sequencing</keyword>
<keyword id="KW-0496">Mitochondrion</keyword>
<keyword id="KW-1185">Reference proteome</keyword>
<keyword id="KW-0687">Ribonucleoprotein</keyword>
<keyword id="KW-0689">Ribosomal protein</keyword>
<keyword id="KW-0809">Transit peptide</keyword>
<feature type="transit peptide" description="Mitochondrion" evidence="4 5">
    <location>
        <begin position="1"/>
        <end position="71"/>
    </location>
</feature>
<feature type="chain" id="PRO_0000030518" description="Large ribosomal subunit protein bL32m">
    <location>
        <begin position="72"/>
        <end position="183"/>
    </location>
</feature>
<feature type="binding site" evidence="9 13">
    <location>
        <position position="104"/>
    </location>
    <ligand>
        <name>Zn(2+)</name>
        <dbReference type="ChEBI" id="CHEBI:29105"/>
    </ligand>
</feature>
<feature type="binding site" evidence="9 13">
    <location>
        <position position="107"/>
    </location>
    <ligand>
        <name>Zn(2+)</name>
        <dbReference type="ChEBI" id="CHEBI:29105"/>
    </ligand>
</feature>
<feature type="binding site" evidence="9 13">
    <location>
        <position position="117"/>
    </location>
    <ligand>
        <name>Zn(2+)</name>
        <dbReference type="ChEBI" id="CHEBI:29105"/>
    </ligand>
</feature>
<feature type="binding site" evidence="9 13">
    <location>
        <position position="120"/>
    </location>
    <ligand>
        <name>Zn(2+)</name>
        <dbReference type="ChEBI" id="CHEBI:29105"/>
    </ligand>
</feature>
<feature type="mutagenesis site" description="Impaired processing by the m-AAA protease." evidence="6">
    <original>CPSC</original>
    <variation>SPSS</variation>
    <location>
        <begin position="104"/>
        <end position="107"/>
    </location>
</feature>
<feature type="mutagenesis site" description="Impaired processing by the m-AAA protease." evidence="6">
    <original>C</original>
    <variation>S</variation>
    <location>
        <position position="117"/>
    </location>
</feature>
<feature type="mutagenesis site" description="Impaired processing by the m-AAA protease." evidence="6">
    <original>C</original>
    <variation>S</variation>
    <location>
        <position position="120"/>
    </location>
</feature>
<organism>
    <name type="scientific">Saccharomyces cerevisiae (strain ATCC 204508 / S288c)</name>
    <name type="common">Baker's yeast</name>
    <dbReference type="NCBI Taxonomy" id="559292"/>
    <lineage>
        <taxon>Eukaryota</taxon>
        <taxon>Fungi</taxon>
        <taxon>Dikarya</taxon>
        <taxon>Ascomycota</taxon>
        <taxon>Saccharomycotina</taxon>
        <taxon>Saccharomycetes</taxon>
        <taxon>Saccharomycetales</taxon>
        <taxon>Saccharomycetaceae</taxon>
        <taxon>Saccharomyces</taxon>
    </lineage>
</organism>
<comment type="function">
    <text evidence="14 15">Component of the mitochondrial ribosome (mitoribosome), a dedicated translation machinery responsible for the synthesis of mitochondrial genome-encoded proteins, including at least some of the essential transmembrane subunits of the mitochondrial respiratory chain. The mitoribosomes are attached to the mitochondrial inner membrane and translation products are cotranslationally integrated into the membrane.</text>
</comment>
<comment type="subunit">
    <text evidence="5 7 9">Component of the mitochondrial large ribosomal subunit (mt-LSU). Mature yeast 74S mitochondrial ribosomes consist of a small (37S) and a large (54S) subunit. The 37S small subunit contains a 15S ribosomal RNA (15S mt-rRNA) and 34 different proteins. The 54S large subunit contains a 21S rRNA (21S mt-rRNA) and 46 different proteins. bL32m has a zinc binding site.</text>
</comment>
<comment type="subcellular location">
    <subcellularLocation>
        <location evidence="1 3 4">Mitochondrion</location>
    </subcellularLocation>
    <text evidence="4 8">Mitoribosomes are tethered to the mitochondrial inner membrane and spatially aligned with the membrane insertion machinery through two distinct membrane contact sites, formed by the 21S rRNA expansion segment 96-ES1 and the inner membrane protein MBA1.</text>
</comment>
<comment type="PTM">
    <text evidence="4 6">MRPL32 precursor is processed by the m-AAA protease (composed of YTA12/RCA1 and YTA10/AFG3), which cleaves the N-terminal transit peptide (PubMed:16239145, PubMed:21610694). Cleavage by the m-AAA protease takes place prior to assembly into the large subunit, an essential step for mitochondrial ribosome (mitoribosome) assembly (PubMed:16239145). Proper processing by the m-AAA protease is dependent on the zinc-binding region within the tightly folded C-terminal domain of MRPL32: zinc-dependent folding halts degradation initiated from the N-terminus and triggers the release of mature MRPL32 (PubMed:21610694).</text>
</comment>
<comment type="miscellaneous">
    <text evidence="2">Present with 1700 molecules/cell in log phase SD medium.</text>
</comment>
<comment type="similarity">
    <text evidence="12">Belongs to the bacterial ribosomal protein bL32 family.</text>
</comment>
<accession>P25348</accession>
<accession>D6VR13</accession>
<name>RM32_YEAST</name>
<dbReference type="EMBL" id="S48552">
    <property type="protein sequence ID" value="AAD13857.1"/>
    <property type="molecule type" value="Genomic_DNA"/>
</dbReference>
<dbReference type="EMBL" id="Z11113">
    <property type="protein sequence ID" value="CAA77444.1"/>
    <property type="molecule type" value="Genomic_DNA"/>
</dbReference>
<dbReference type="EMBL" id="X59720">
    <property type="protein sequence ID" value="CAA42340.1"/>
    <property type="molecule type" value="Genomic_DNA"/>
</dbReference>
<dbReference type="EMBL" id="AY693214">
    <property type="protein sequence ID" value="AAT93233.1"/>
    <property type="molecule type" value="Genomic_DNA"/>
</dbReference>
<dbReference type="EMBL" id="BK006937">
    <property type="protein sequence ID" value="DAA07482.1"/>
    <property type="molecule type" value="Genomic_DNA"/>
</dbReference>
<dbReference type="PIR" id="S22265">
    <property type="entry name" value="R5BY32"/>
</dbReference>
<dbReference type="RefSeq" id="NP_009929.1">
    <property type="nucleotide sequence ID" value="NM_001178716.1"/>
</dbReference>
<dbReference type="PDB" id="3J6B">
    <property type="method" value="EM"/>
    <property type="resolution" value="3.20 A"/>
    <property type="chains" value="W=1-183"/>
</dbReference>
<dbReference type="PDB" id="5MRC">
    <property type="method" value="EM"/>
    <property type="resolution" value="3.25 A"/>
    <property type="chains" value="W=72-183"/>
</dbReference>
<dbReference type="PDB" id="5MRE">
    <property type="method" value="EM"/>
    <property type="resolution" value="3.75 A"/>
    <property type="chains" value="W=72-183"/>
</dbReference>
<dbReference type="PDB" id="5MRF">
    <property type="method" value="EM"/>
    <property type="resolution" value="4.97 A"/>
    <property type="chains" value="W=72-183"/>
</dbReference>
<dbReference type="PDBsum" id="3J6B"/>
<dbReference type="PDBsum" id="5MRC"/>
<dbReference type="PDBsum" id="5MRE"/>
<dbReference type="PDBsum" id="5MRF"/>
<dbReference type="EMDB" id="EMD-3551"/>
<dbReference type="EMDB" id="EMD-3552"/>
<dbReference type="EMDB" id="EMD-3553"/>
<dbReference type="SMR" id="P25348"/>
<dbReference type="BioGRID" id="30981">
    <property type="interactions" value="237"/>
</dbReference>
<dbReference type="ComplexPortal" id="CPX-1602">
    <property type="entry name" value="54S mitochondrial large ribosomal subunit"/>
</dbReference>
<dbReference type="DIP" id="DIP-4987N"/>
<dbReference type="FunCoup" id="P25348">
    <property type="interactions" value="413"/>
</dbReference>
<dbReference type="IntAct" id="P25348">
    <property type="interactions" value="60"/>
</dbReference>
<dbReference type="MINT" id="P25348"/>
<dbReference type="STRING" id="4932.YCR003W"/>
<dbReference type="PaxDb" id="4932-YCR003W"/>
<dbReference type="PeptideAtlas" id="P25348"/>
<dbReference type="EnsemblFungi" id="YCR003W_mRNA">
    <property type="protein sequence ID" value="YCR003W"/>
    <property type="gene ID" value="YCR003W"/>
</dbReference>
<dbReference type="GeneID" id="850359"/>
<dbReference type="KEGG" id="sce:YCR003W"/>
<dbReference type="AGR" id="SGD:S000000596"/>
<dbReference type="SGD" id="S000000596">
    <property type="gene designation" value="MRPL32"/>
</dbReference>
<dbReference type="VEuPathDB" id="FungiDB:YCR003W"/>
<dbReference type="eggNOG" id="KOG4080">
    <property type="taxonomic scope" value="Eukaryota"/>
</dbReference>
<dbReference type="GeneTree" id="ENSGT00390000014996"/>
<dbReference type="HOGENOM" id="CLU_095763_1_0_1"/>
<dbReference type="InParanoid" id="P25348"/>
<dbReference type="OMA" id="IRHIWKT"/>
<dbReference type="OrthoDB" id="2014905at2759"/>
<dbReference type="BioCyc" id="YEAST:G3O-29322-MONOMER"/>
<dbReference type="Reactome" id="R-SCE-9837999">
    <property type="pathway name" value="Mitochondrial protein degradation"/>
</dbReference>
<dbReference type="BioGRID-ORCS" id="850359">
    <property type="hits" value="1 hit in 10 CRISPR screens"/>
</dbReference>
<dbReference type="PRO" id="PR:P25348"/>
<dbReference type="Proteomes" id="UP000002311">
    <property type="component" value="Chromosome III"/>
</dbReference>
<dbReference type="RNAct" id="P25348">
    <property type="molecule type" value="protein"/>
</dbReference>
<dbReference type="GO" id="GO:0005743">
    <property type="term" value="C:mitochondrial inner membrane"/>
    <property type="evidence" value="ECO:0000314"/>
    <property type="project" value="UniProtKB"/>
</dbReference>
<dbReference type="GO" id="GO:0005762">
    <property type="term" value="C:mitochondrial large ribosomal subunit"/>
    <property type="evidence" value="ECO:0000314"/>
    <property type="project" value="SGD"/>
</dbReference>
<dbReference type="GO" id="GO:0005739">
    <property type="term" value="C:mitochondrion"/>
    <property type="evidence" value="ECO:0007005"/>
    <property type="project" value="SGD"/>
</dbReference>
<dbReference type="GO" id="GO:0003735">
    <property type="term" value="F:structural constituent of ribosome"/>
    <property type="evidence" value="ECO:0000314"/>
    <property type="project" value="SGD"/>
</dbReference>
<dbReference type="GO" id="GO:0008270">
    <property type="term" value="F:zinc ion binding"/>
    <property type="evidence" value="ECO:0000314"/>
    <property type="project" value="UniProtKB"/>
</dbReference>
<dbReference type="GO" id="GO:0032543">
    <property type="term" value="P:mitochondrial translation"/>
    <property type="evidence" value="ECO:0000303"/>
    <property type="project" value="ComplexPortal"/>
</dbReference>
<dbReference type="InterPro" id="IPR051991">
    <property type="entry name" value="Mitoribosomal_protein_bL32"/>
</dbReference>
<dbReference type="InterPro" id="IPR002677">
    <property type="entry name" value="Ribosomal_bL32"/>
</dbReference>
<dbReference type="InterPro" id="IPR011332">
    <property type="entry name" value="Ribosomal_zn-bd"/>
</dbReference>
<dbReference type="PANTHER" id="PTHR21026">
    <property type="entry name" value="39S RIBOSOMAL PROTEIN L32, MITOCHONDRIAL"/>
    <property type="match status" value="1"/>
</dbReference>
<dbReference type="PANTHER" id="PTHR21026:SF2">
    <property type="entry name" value="LARGE RIBOSOMAL SUBUNIT PROTEIN BL32M"/>
    <property type="match status" value="1"/>
</dbReference>
<dbReference type="Pfam" id="PF01783">
    <property type="entry name" value="Ribosomal_L32p"/>
    <property type="match status" value="1"/>
</dbReference>
<dbReference type="SUPFAM" id="SSF57829">
    <property type="entry name" value="Zn-binding ribosomal proteins"/>
    <property type="match status" value="1"/>
</dbReference>
<sequence length="183" mass="21437">MNSLIFGKQLAFHKIVPTTAIGWLVPLGNPSLQIPGQKQLGSIHRWLREKLQQDHKDTEDKDFFSNNGILLAVPKKKVSHQKKRQKLYGPGKKQLKMIHHLNKCPSCGHYKRANTLCMYCVGQISHIWKTHTAKEEIKPRQEEELSELDQRVLYPGRRDTKYTKDLKDKDNYLERRVRTLKKD</sequence>
<proteinExistence type="evidence at protein level"/>
<reference key="1">
    <citation type="journal article" date="1991" name="Yeast">
        <title>Sequence of the CDC10 region at chromosome III of Saccharomyces cerevisiae.</title>
        <authorList>
            <person name="Steensma H.Y."/>
            <person name="van der Aart Q.J.M."/>
        </authorList>
    </citation>
    <scope>NUCLEOTIDE SEQUENCE [GENOMIC DNA]</scope>
</reference>
<reference key="2">
    <citation type="journal article" date="1992" name="Yeast">
        <title>The complete sequence of a 10.8kb fragment to the right of the chromosome III centromere of Saccharomyces cerevisiae.</title>
        <authorList>
            <person name="Biteau N."/>
            <person name="Fremaux C."/>
            <person name="Hebrard S."/>
            <person name="Menara A."/>
            <person name="Aigle M."/>
            <person name="Crouzet M."/>
        </authorList>
    </citation>
    <scope>NUCLEOTIDE SEQUENCE [GENOMIC DNA]</scope>
</reference>
<reference key="3">
    <citation type="journal article" date="1992" name="Nature">
        <title>The complete DNA sequence of yeast chromosome III.</title>
        <authorList>
            <person name="Oliver S.G."/>
            <person name="van der Aart Q.J.M."/>
            <person name="Agostoni-Carbone M.L."/>
            <person name="Aigle M."/>
            <person name="Alberghina L."/>
            <person name="Alexandraki D."/>
            <person name="Antoine G."/>
            <person name="Anwar R."/>
            <person name="Ballesta J.P.G."/>
            <person name="Benit P."/>
            <person name="Berben G."/>
            <person name="Bergantino E."/>
            <person name="Biteau N."/>
            <person name="Bolle P.-A."/>
            <person name="Bolotin-Fukuhara M."/>
            <person name="Brown A."/>
            <person name="Brown A.J.P."/>
            <person name="Buhler J.-M."/>
            <person name="Carcano C."/>
            <person name="Carignani G."/>
            <person name="Cederberg H."/>
            <person name="Chanet R."/>
            <person name="Contreras R."/>
            <person name="Crouzet M."/>
            <person name="Daignan-Fornier B."/>
            <person name="Defoor E."/>
            <person name="Delgado M.D."/>
            <person name="Demolder J."/>
            <person name="Doira C."/>
            <person name="Dubois E."/>
            <person name="Dujon B."/>
            <person name="Duesterhoeft A."/>
            <person name="Erdmann D."/>
            <person name="Esteban M."/>
            <person name="Fabre F."/>
            <person name="Fairhead C."/>
            <person name="Faye G."/>
            <person name="Feldmann H."/>
            <person name="Fiers W."/>
            <person name="Francingues-Gaillard M.-C."/>
            <person name="Franco L."/>
            <person name="Frontali L."/>
            <person name="Fukuhara H."/>
            <person name="Fuller L.J."/>
            <person name="Galland P."/>
            <person name="Gent M.E."/>
            <person name="Gigot D."/>
            <person name="Gilliquet V."/>
            <person name="Glansdorff N."/>
            <person name="Goffeau A."/>
            <person name="Grenson M."/>
            <person name="Grisanti P."/>
            <person name="Grivell L.A."/>
            <person name="de Haan M."/>
            <person name="Haasemann M."/>
            <person name="Hatat D."/>
            <person name="Hoenicka J."/>
            <person name="Hegemann J.H."/>
            <person name="Herbert C.J."/>
            <person name="Hilger F."/>
            <person name="Hohmann S."/>
            <person name="Hollenberg C.P."/>
            <person name="Huse K."/>
            <person name="Iborra F."/>
            <person name="Indge K.J."/>
            <person name="Isono K."/>
            <person name="Jacq C."/>
            <person name="Jacquet M."/>
            <person name="James C.M."/>
            <person name="Jauniaux J.-C."/>
            <person name="Jia Y."/>
            <person name="Jimenez A."/>
            <person name="Kelly A."/>
            <person name="Kleinhans U."/>
            <person name="Kreisl P."/>
            <person name="Lanfranchi G."/>
            <person name="Lewis C."/>
            <person name="van der Linden C.G."/>
            <person name="Lucchini G."/>
            <person name="Lutzenkirchen K."/>
            <person name="Maat M.J."/>
            <person name="Mallet L."/>
            <person name="Mannhaupt G."/>
            <person name="Martegani E."/>
            <person name="Mathieu A."/>
            <person name="Maurer C.T.C."/>
            <person name="McConnell D."/>
            <person name="McKee R.A."/>
            <person name="Messenguy F."/>
            <person name="Mewes H.-W."/>
            <person name="Molemans F."/>
            <person name="Montague M.A."/>
            <person name="Muzi Falconi M."/>
            <person name="Navas L."/>
            <person name="Newlon C.S."/>
            <person name="Noone D."/>
            <person name="Pallier C."/>
            <person name="Panzeri L."/>
            <person name="Pearson B.M."/>
            <person name="Perea J."/>
            <person name="Philippsen P."/>
            <person name="Pierard A."/>
            <person name="Planta R.J."/>
            <person name="Plevani P."/>
            <person name="Poetsch B."/>
            <person name="Pohl F.M."/>
            <person name="Purnelle B."/>
            <person name="Ramezani Rad M."/>
            <person name="Rasmussen S.W."/>
            <person name="Raynal A."/>
            <person name="Remacha M.A."/>
            <person name="Richterich P."/>
            <person name="Roberts A.B."/>
            <person name="Rodriguez F."/>
            <person name="Sanz E."/>
            <person name="Schaaff-Gerstenschlaeger I."/>
            <person name="Scherens B."/>
            <person name="Schweitzer B."/>
            <person name="Shu Y."/>
            <person name="Skala J."/>
            <person name="Slonimski P.P."/>
            <person name="Sor F."/>
            <person name="Soustelle C."/>
            <person name="Spiegelberg R."/>
            <person name="Stateva L.I."/>
            <person name="Steensma H.Y."/>
            <person name="Steiner S."/>
            <person name="Thierry A."/>
            <person name="Thireos G."/>
            <person name="Tzermia M."/>
            <person name="Urrestarazu L.A."/>
            <person name="Valle G."/>
            <person name="Vetter I."/>
            <person name="van Vliet-Reedijk J.C."/>
            <person name="Voet M."/>
            <person name="Volckaert G."/>
            <person name="Vreken P."/>
            <person name="Wang H."/>
            <person name="Warmington J.R."/>
            <person name="von Wettstein D."/>
            <person name="Wicksteed B.L."/>
            <person name="Wilson C."/>
            <person name="Wurst H."/>
            <person name="Xu G."/>
            <person name="Yoshikawa A."/>
            <person name="Zimmermann F.K."/>
            <person name="Sgouros J.G."/>
        </authorList>
    </citation>
    <scope>NUCLEOTIDE SEQUENCE [LARGE SCALE GENOMIC DNA]</scope>
    <source>
        <strain>ATCC 204508 / S288c</strain>
    </source>
</reference>
<reference key="4">
    <citation type="journal article" date="2014" name="G3 (Bethesda)">
        <title>The reference genome sequence of Saccharomyces cerevisiae: Then and now.</title>
        <authorList>
            <person name="Engel S.R."/>
            <person name="Dietrich F.S."/>
            <person name="Fisk D.G."/>
            <person name="Binkley G."/>
            <person name="Balakrishnan R."/>
            <person name="Costanzo M.C."/>
            <person name="Dwight S.S."/>
            <person name="Hitz B.C."/>
            <person name="Karra K."/>
            <person name="Nash R.S."/>
            <person name="Weng S."/>
            <person name="Wong E.D."/>
            <person name="Lloyd P."/>
            <person name="Skrzypek M.S."/>
            <person name="Miyasato S.R."/>
            <person name="Simison M."/>
            <person name="Cherry J.M."/>
        </authorList>
    </citation>
    <scope>GENOME REANNOTATION</scope>
    <source>
        <strain>ATCC 204508 / S288c</strain>
    </source>
</reference>
<reference key="5">
    <citation type="journal article" date="2007" name="Genome Res.">
        <title>Approaching a complete repository of sequence-verified protein-encoding clones for Saccharomyces cerevisiae.</title>
        <authorList>
            <person name="Hu Y."/>
            <person name="Rolfs A."/>
            <person name="Bhullar B."/>
            <person name="Murthy T.V.S."/>
            <person name="Zhu C."/>
            <person name="Berger M.F."/>
            <person name="Camargo A.A."/>
            <person name="Kelley F."/>
            <person name="McCarron S."/>
            <person name="Jepson D."/>
            <person name="Richardson A."/>
            <person name="Raphael J."/>
            <person name="Moreira D."/>
            <person name="Taycher E."/>
            <person name="Zuo D."/>
            <person name="Mohr S."/>
            <person name="Kane M.F."/>
            <person name="Williamson J."/>
            <person name="Simpson A.J.G."/>
            <person name="Bulyk M.L."/>
            <person name="Harlow E."/>
            <person name="Marsischky G."/>
            <person name="Kolodner R.D."/>
            <person name="LaBaer J."/>
        </authorList>
    </citation>
    <scope>NUCLEOTIDE SEQUENCE [GENOMIC DNA]</scope>
    <source>
        <strain>ATCC 204508 / S288c</strain>
    </source>
</reference>
<reference key="6">
    <citation type="journal article" date="1991" name="FEBS Lett.">
        <title>Extended N-terminal sequencing of proteins of the large ribosomal subunit from yeast mitochondria.</title>
        <authorList>
            <person name="Grohmann L."/>
            <person name="Graack H.-R."/>
            <person name="Kruft V."/>
            <person name="Choli T."/>
            <person name="Goldschmidt-Reisin S."/>
            <person name="Kitakawa M."/>
        </authorList>
    </citation>
    <scope>PROTEIN SEQUENCE OF 72-106</scope>
    <scope>SUBUNIT</scope>
    <source>
        <strain>07173</strain>
    </source>
</reference>
<reference key="7">
    <citation type="journal article" date="2003" name="Nature">
        <title>Global analysis of protein localization in budding yeast.</title>
        <authorList>
            <person name="Huh W.-K."/>
            <person name="Falvo J.V."/>
            <person name="Gerke L.C."/>
            <person name="Carroll A.S."/>
            <person name="Howson R.W."/>
            <person name="Weissman J.S."/>
            <person name="O'Shea E.K."/>
        </authorList>
    </citation>
    <scope>SUBCELLULAR LOCATION [LARGE SCALE ANALYSIS]</scope>
</reference>
<reference key="8">
    <citation type="journal article" date="2003" name="Nature">
        <title>Global analysis of protein expression in yeast.</title>
        <authorList>
            <person name="Ghaemmaghami S."/>
            <person name="Huh W.-K."/>
            <person name="Bower K."/>
            <person name="Howson R.W."/>
            <person name="Belle A."/>
            <person name="Dephoure N."/>
            <person name="O'Shea E.K."/>
            <person name="Weissman J.S."/>
        </authorList>
    </citation>
    <scope>LEVEL OF PROTEIN EXPRESSION [LARGE SCALE ANALYSIS]</scope>
</reference>
<reference key="9">
    <citation type="journal article" date="2003" name="Proc. Natl. Acad. Sci. U.S.A.">
        <title>The proteome of Saccharomyces cerevisiae mitochondria.</title>
        <authorList>
            <person name="Sickmann A."/>
            <person name="Reinders J."/>
            <person name="Wagner Y."/>
            <person name="Joppich C."/>
            <person name="Zahedi R.P."/>
            <person name="Meyer H.E."/>
            <person name="Schoenfisch B."/>
            <person name="Perschil I."/>
            <person name="Chacinska A."/>
            <person name="Guiard B."/>
            <person name="Rehling P."/>
            <person name="Pfanner N."/>
            <person name="Meisinger C."/>
        </authorList>
    </citation>
    <scope>SUBCELLULAR LOCATION [LARGE SCALE ANALYSIS]</scope>
    <source>
        <strain>ATCC 76625 / YPH499</strain>
    </source>
</reference>
<reference key="10">
    <citation type="journal article" date="2005" name="Cell">
        <title>The m-AAA protease defective in hereditary spastic paraplegia controls ribosome assembly in mitochondria.</title>
        <authorList>
            <person name="Nolden M."/>
            <person name="Ehses S."/>
            <person name="Koppen M."/>
            <person name="Bernacchia A."/>
            <person name="Rugarli E.I."/>
            <person name="Langer T."/>
        </authorList>
    </citation>
    <scope>SUBCELLULAR LOCATION</scope>
    <scope>PROTEOLYTIC CLEAVAGE</scope>
</reference>
<reference key="11">
    <citation type="journal article" date="2011" name="EMBO J.">
        <title>Presequence-dependent folding ensures MrpL32 processing by the m-AAA protease in mitochondria.</title>
        <authorList>
            <person name="Bonn F."/>
            <person name="Tatsuta T."/>
            <person name="Petrungaro C."/>
            <person name="Riemer J."/>
            <person name="Langer T."/>
        </authorList>
    </citation>
    <scope>PROTEOLYTIC CLEAVAGE</scope>
    <scope>MUTAGENESIS OF 104-CYS--CYS-107; CYS-117 AND CYS-120</scope>
</reference>
<reference key="12">
    <citation type="journal article" date="2015" name="Nat. Commun.">
        <title>Organization of the mitochondrial translation machinery studied in situ by cryoelectron tomography.</title>
        <authorList>
            <person name="Pfeffer S."/>
            <person name="Woellhaf M.W."/>
            <person name="Herrmann J.M."/>
            <person name="Forster F."/>
        </authorList>
    </citation>
    <scope>SUBCELLULAR LOCATION</scope>
</reference>
<reference key="13">
    <citation type="journal article" date="2014" name="Science">
        <title>Structure of the yeast mitochondrial large ribosomal subunit.</title>
        <authorList>
            <person name="Amunts A."/>
            <person name="Brown A."/>
            <person name="Bai X.C."/>
            <person name="Llacer J.L."/>
            <person name="Hussain T."/>
            <person name="Emsley P."/>
            <person name="Long F."/>
            <person name="Murshudov G."/>
            <person name="Scheres S.H."/>
            <person name="Ramakrishnan V."/>
        </authorList>
    </citation>
    <scope>STRUCTURE BY ELECTRON MICROSCOPY (3.20 ANGSTROMS)</scope>
    <scope>SUBUNIT</scope>
</reference>
<reference key="14">
    <citation type="journal article" date="2017" name="Science">
        <title>The structure of the yeast mitochondrial ribosome.</title>
        <authorList>
            <person name="Desai N."/>
            <person name="Brown A."/>
            <person name="Amunts A."/>
            <person name="Ramakrishnan V."/>
        </authorList>
    </citation>
    <scope>STRUCTURE BY ELECTRON MICROSCOPY (3.25 ANGSTROMS) IN COMPLEX WITH MITOCHONDRIAL RIBOSOME AND ZINC</scope>
    <scope>SUBUNIT</scope>
</reference>
<evidence type="ECO:0000269" key="1">
    <source>
    </source>
</evidence>
<evidence type="ECO:0000269" key="2">
    <source>
    </source>
</evidence>
<evidence type="ECO:0000269" key="3">
    <source>
    </source>
</evidence>
<evidence type="ECO:0000269" key="4">
    <source>
    </source>
</evidence>
<evidence type="ECO:0000269" key="5">
    <source>
    </source>
</evidence>
<evidence type="ECO:0000269" key="6">
    <source>
    </source>
</evidence>
<evidence type="ECO:0000269" key="7">
    <source>
    </source>
</evidence>
<evidence type="ECO:0000269" key="8">
    <source>
    </source>
</evidence>
<evidence type="ECO:0000269" key="9">
    <source>
    </source>
</evidence>
<evidence type="ECO:0000303" key="10">
    <source>
    </source>
</evidence>
<evidence type="ECO:0000303" key="11">
    <source>
    </source>
</evidence>
<evidence type="ECO:0000305" key="12"/>
<evidence type="ECO:0000305" key="13">
    <source>
    </source>
</evidence>
<evidence type="ECO:0000305" key="14">
    <source>
    </source>
</evidence>
<evidence type="ECO:0000305" key="15">
    <source>
    </source>
</evidence>